<comment type="function">
    <text evidence="1">Specifically methylates the N4 position of cytidine in position 1402 (C1402) of 16S rRNA.</text>
</comment>
<comment type="catalytic activity">
    <reaction evidence="1">
        <text>cytidine(1402) in 16S rRNA + S-adenosyl-L-methionine = N(4)-methylcytidine(1402) in 16S rRNA + S-adenosyl-L-homocysteine + H(+)</text>
        <dbReference type="Rhea" id="RHEA:42928"/>
        <dbReference type="Rhea" id="RHEA-COMP:10286"/>
        <dbReference type="Rhea" id="RHEA-COMP:10287"/>
        <dbReference type="ChEBI" id="CHEBI:15378"/>
        <dbReference type="ChEBI" id="CHEBI:57856"/>
        <dbReference type="ChEBI" id="CHEBI:59789"/>
        <dbReference type="ChEBI" id="CHEBI:74506"/>
        <dbReference type="ChEBI" id="CHEBI:82748"/>
        <dbReference type="EC" id="2.1.1.199"/>
    </reaction>
</comment>
<comment type="subcellular location">
    <subcellularLocation>
        <location evidence="1">Cytoplasm</location>
    </subcellularLocation>
</comment>
<comment type="similarity">
    <text evidence="1">Belongs to the methyltransferase superfamily. RsmH family.</text>
</comment>
<sequence>MGNEFQHRTVLLDEAVDALVTRPDGVYVDGTFGRGGHSRAVLARLGDAGRLIAFDKDPRAIETAESIEDARFEIVHDSFAAMKGALDARGVGRVSGVLLDLGVSSPQVDDPARGFSFRANGPLDMRMDPTRGESAAEWLARASVQELTEVIRDYGEERFAFQIAKAIVARRAESDRLGPLDSTGELAQIVGHVVKTREKGKDPATRTFQAIRIHVNQELADLQVVLEAALSLLEQGGRLVVISFHSLEDRIVKRFLQAHASAPAVDRRLPIRAADLPRPPLKLLGRMFPNDAEVAANPRARSAVMRIAERVAP</sequence>
<dbReference type="EC" id="2.1.1.199" evidence="1"/>
<dbReference type="EMBL" id="CP000546">
    <property type="protein sequence ID" value="ABN03637.1"/>
    <property type="molecule type" value="Genomic_DNA"/>
</dbReference>
<dbReference type="RefSeq" id="WP_004194427.1">
    <property type="nucleotide sequence ID" value="NC_008836.1"/>
</dbReference>
<dbReference type="SMR" id="A2S5V3"/>
<dbReference type="GeneID" id="93061635"/>
<dbReference type="KEGG" id="bml:BMA10229_A1339"/>
<dbReference type="HOGENOM" id="CLU_038422_2_0_4"/>
<dbReference type="Proteomes" id="UP000002283">
    <property type="component" value="Chromosome I"/>
</dbReference>
<dbReference type="GO" id="GO:0005737">
    <property type="term" value="C:cytoplasm"/>
    <property type="evidence" value="ECO:0007669"/>
    <property type="project" value="UniProtKB-SubCell"/>
</dbReference>
<dbReference type="GO" id="GO:0071424">
    <property type="term" value="F:rRNA (cytosine-N4-)-methyltransferase activity"/>
    <property type="evidence" value="ECO:0007669"/>
    <property type="project" value="UniProtKB-UniRule"/>
</dbReference>
<dbReference type="GO" id="GO:0070475">
    <property type="term" value="P:rRNA base methylation"/>
    <property type="evidence" value="ECO:0007669"/>
    <property type="project" value="UniProtKB-UniRule"/>
</dbReference>
<dbReference type="Gene3D" id="1.10.150.170">
    <property type="entry name" value="Putative methyltransferase TM0872, insert domain"/>
    <property type="match status" value="1"/>
</dbReference>
<dbReference type="Gene3D" id="3.40.50.150">
    <property type="entry name" value="Vaccinia Virus protein VP39"/>
    <property type="match status" value="1"/>
</dbReference>
<dbReference type="HAMAP" id="MF_01007">
    <property type="entry name" value="16SrRNA_methyltr_H"/>
    <property type="match status" value="1"/>
</dbReference>
<dbReference type="InterPro" id="IPR002903">
    <property type="entry name" value="RsmH"/>
</dbReference>
<dbReference type="InterPro" id="IPR023397">
    <property type="entry name" value="SAM-dep_MeTrfase_MraW_recog"/>
</dbReference>
<dbReference type="InterPro" id="IPR029063">
    <property type="entry name" value="SAM-dependent_MTases_sf"/>
</dbReference>
<dbReference type="NCBIfam" id="TIGR00006">
    <property type="entry name" value="16S rRNA (cytosine(1402)-N(4))-methyltransferase RsmH"/>
    <property type="match status" value="1"/>
</dbReference>
<dbReference type="PANTHER" id="PTHR11265:SF0">
    <property type="entry name" value="12S RRNA N4-METHYLCYTIDINE METHYLTRANSFERASE"/>
    <property type="match status" value="1"/>
</dbReference>
<dbReference type="PANTHER" id="PTHR11265">
    <property type="entry name" value="S-ADENOSYL-METHYLTRANSFERASE MRAW"/>
    <property type="match status" value="1"/>
</dbReference>
<dbReference type="Pfam" id="PF01795">
    <property type="entry name" value="Methyltransf_5"/>
    <property type="match status" value="1"/>
</dbReference>
<dbReference type="PIRSF" id="PIRSF004486">
    <property type="entry name" value="MraW"/>
    <property type="match status" value="1"/>
</dbReference>
<dbReference type="SUPFAM" id="SSF81799">
    <property type="entry name" value="Putative methyltransferase TM0872, insert domain"/>
    <property type="match status" value="1"/>
</dbReference>
<dbReference type="SUPFAM" id="SSF53335">
    <property type="entry name" value="S-adenosyl-L-methionine-dependent methyltransferases"/>
    <property type="match status" value="1"/>
</dbReference>
<keyword id="KW-0963">Cytoplasm</keyword>
<keyword id="KW-0489">Methyltransferase</keyword>
<keyword id="KW-0698">rRNA processing</keyword>
<keyword id="KW-0949">S-adenosyl-L-methionine</keyword>
<keyword id="KW-0808">Transferase</keyword>
<feature type="chain" id="PRO_0000386772" description="Ribosomal RNA small subunit methyltransferase H">
    <location>
        <begin position="1"/>
        <end position="313"/>
    </location>
</feature>
<feature type="binding site" evidence="1">
    <location>
        <begin position="35"/>
        <end position="37"/>
    </location>
    <ligand>
        <name>S-adenosyl-L-methionine</name>
        <dbReference type="ChEBI" id="CHEBI:59789"/>
    </ligand>
</feature>
<feature type="binding site" evidence="1">
    <location>
        <position position="55"/>
    </location>
    <ligand>
        <name>S-adenosyl-L-methionine</name>
        <dbReference type="ChEBI" id="CHEBI:59789"/>
    </ligand>
</feature>
<feature type="binding site" evidence="1">
    <location>
        <position position="79"/>
    </location>
    <ligand>
        <name>S-adenosyl-L-methionine</name>
        <dbReference type="ChEBI" id="CHEBI:59789"/>
    </ligand>
</feature>
<feature type="binding site" evidence="1">
    <location>
        <position position="100"/>
    </location>
    <ligand>
        <name>S-adenosyl-L-methionine</name>
        <dbReference type="ChEBI" id="CHEBI:59789"/>
    </ligand>
</feature>
<feature type="binding site" evidence="1">
    <location>
        <position position="107"/>
    </location>
    <ligand>
        <name>S-adenosyl-L-methionine</name>
        <dbReference type="ChEBI" id="CHEBI:59789"/>
    </ligand>
</feature>
<protein>
    <recommendedName>
        <fullName evidence="1">Ribosomal RNA small subunit methyltransferase H</fullName>
        <ecNumber evidence="1">2.1.1.199</ecNumber>
    </recommendedName>
    <alternativeName>
        <fullName evidence="1">16S rRNA m(4)C1402 methyltransferase</fullName>
    </alternativeName>
    <alternativeName>
        <fullName evidence="1">rRNA (cytosine-N(4)-)-methyltransferase RsmH</fullName>
    </alternativeName>
</protein>
<accession>A2S5V3</accession>
<proteinExistence type="inferred from homology"/>
<gene>
    <name evidence="1" type="primary">rsmH</name>
    <name type="synonym">mraW</name>
    <name type="ordered locus">BMA10229_A1339</name>
</gene>
<evidence type="ECO:0000255" key="1">
    <source>
        <dbReference type="HAMAP-Rule" id="MF_01007"/>
    </source>
</evidence>
<organism>
    <name type="scientific">Burkholderia mallei (strain NCTC 10229)</name>
    <dbReference type="NCBI Taxonomy" id="412022"/>
    <lineage>
        <taxon>Bacteria</taxon>
        <taxon>Pseudomonadati</taxon>
        <taxon>Pseudomonadota</taxon>
        <taxon>Betaproteobacteria</taxon>
        <taxon>Burkholderiales</taxon>
        <taxon>Burkholderiaceae</taxon>
        <taxon>Burkholderia</taxon>
        <taxon>pseudomallei group</taxon>
    </lineage>
</organism>
<name>RSMH_BURM9</name>
<reference key="1">
    <citation type="journal article" date="2010" name="Genome Biol. Evol.">
        <title>Continuing evolution of Burkholderia mallei through genome reduction and large-scale rearrangements.</title>
        <authorList>
            <person name="Losada L."/>
            <person name="Ronning C.M."/>
            <person name="DeShazer D."/>
            <person name="Woods D."/>
            <person name="Fedorova N."/>
            <person name="Kim H.S."/>
            <person name="Shabalina S.A."/>
            <person name="Pearson T.R."/>
            <person name="Brinkac L."/>
            <person name="Tan P."/>
            <person name="Nandi T."/>
            <person name="Crabtree J."/>
            <person name="Badger J."/>
            <person name="Beckstrom-Sternberg S."/>
            <person name="Saqib M."/>
            <person name="Schutzer S.E."/>
            <person name="Keim P."/>
            <person name="Nierman W.C."/>
        </authorList>
    </citation>
    <scope>NUCLEOTIDE SEQUENCE [LARGE SCALE GENOMIC DNA]</scope>
    <source>
        <strain>NCTC 10229</strain>
    </source>
</reference>